<accession>Q8KJ25</accession>
<reference key="1">
    <citation type="submission" date="2002-06" db="EMBL/GenBank/DDBJ databases">
        <title>Clostridium botulinum GroEL and GroES homolog.</title>
        <authorList>
            <person name="Sagane Y."/>
            <person name="Hasegawa K."/>
            <person name="Mutoh S."/>
            <person name="Kouguchi H."/>
            <person name="Suzuki T."/>
            <person name="Sunagawa H."/>
            <person name="Watanabe T."/>
            <person name="Ohyama T."/>
        </authorList>
    </citation>
    <scope>NUCLEOTIDE SEQUENCE [GENOMIC DNA]</scope>
    <source>
        <strain>D-4947 / Type D</strain>
    </source>
</reference>
<dbReference type="EMBL" id="AB086955">
    <property type="protein sequence ID" value="BAC06586.1"/>
    <property type="molecule type" value="Genomic_DNA"/>
</dbReference>
<dbReference type="RefSeq" id="WP_039257181.1">
    <property type="nucleotide sequence ID" value="NZ_LHYY01000030.1"/>
</dbReference>
<dbReference type="SMR" id="Q8KJ25"/>
<dbReference type="STRING" id="929506.CbC4_2210"/>
<dbReference type="PATRIC" id="fig|1491.434.peg.1338"/>
<dbReference type="eggNOG" id="COG0234">
    <property type="taxonomic scope" value="Bacteria"/>
</dbReference>
<dbReference type="GO" id="GO:0005737">
    <property type="term" value="C:cytoplasm"/>
    <property type="evidence" value="ECO:0007669"/>
    <property type="project" value="UniProtKB-SubCell"/>
</dbReference>
<dbReference type="GO" id="GO:0005524">
    <property type="term" value="F:ATP binding"/>
    <property type="evidence" value="ECO:0007669"/>
    <property type="project" value="InterPro"/>
</dbReference>
<dbReference type="GO" id="GO:0046872">
    <property type="term" value="F:metal ion binding"/>
    <property type="evidence" value="ECO:0007669"/>
    <property type="project" value="TreeGrafter"/>
</dbReference>
<dbReference type="GO" id="GO:0044183">
    <property type="term" value="F:protein folding chaperone"/>
    <property type="evidence" value="ECO:0007669"/>
    <property type="project" value="InterPro"/>
</dbReference>
<dbReference type="GO" id="GO:0051087">
    <property type="term" value="F:protein-folding chaperone binding"/>
    <property type="evidence" value="ECO:0007669"/>
    <property type="project" value="TreeGrafter"/>
</dbReference>
<dbReference type="GO" id="GO:0051082">
    <property type="term" value="F:unfolded protein binding"/>
    <property type="evidence" value="ECO:0007669"/>
    <property type="project" value="TreeGrafter"/>
</dbReference>
<dbReference type="GO" id="GO:0051085">
    <property type="term" value="P:chaperone cofactor-dependent protein refolding"/>
    <property type="evidence" value="ECO:0007669"/>
    <property type="project" value="TreeGrafter"/>
</dbReference>
<dbReference type="CDD" id="cd00320">
    <property type="entry name" value="cpn10"/>
    <property type="match status" value="1"/>
</dbReference>
<dbReference type="FunFam" id="2.30.33.40:FF:000001">
    <property type="entry name" value="10 kDa chaperonin"/>
    <property type="match status" value="1"/>
</dbReference>
<dbReference type="Gene3D" id="2.30.33.40">
    <property type="entry name" value="GroES chaperonin"/>
    <property type="match status" value="1"/>
</dbReference>
<dbReference type="HAMAP" id="MF_00580">
    <property type="entry name" value="CH10"/>
    <property type="match status" value="1"/>
</dbReference>
<dbReference type="InterPro" id="IPR020818">
    <property type="entry name" value="Chaperonin_GroES"/>
</dbReference>
<dbReference type="InterPro" id="IPR037124">
    <property type="entry name" value="Chaperonin_GroES_sf"/>
</dbReference>
<dbReference type="InterPro" id="IPR018369">
    <property type="entry name" value="Chaprnonin_Cpn10_CS"/>
</dbReference>
<dbReference type="InterPro" id="IPR011032">
    <property type="entry name" value="GroES-like_sf"/>
</dbReference>
<dbReference type="NCBIfam" id="NF001527">
    <property type="entry name" value="PRK00364.1-2"/>
    <property type="match status" value="1"/>
</dbReference>
<dbReference type="NCBIfam" id="NF001531">
    <property type="entry name" value="PRK00364.2-2"/>
    <property type="match status" value="1"/>
</dbReference>
<dbReference type="NCBIfam" id="NF001533">
    <property type="entry name" value="PRK00364.2-4"/>
    <property type="match status" value="1"/>
</dbReference>
<dbReference type="NCBIfam" id="NF001534">
    <property type="entry name" value="PRK00364.2-5"/>
    <property type="match status" value="1"/>
</dbReference>
<dbReference type="PANTHER" id="PTHR10772">
    <property type="entry name" value="10 KDA HEAT SHOCK PROTEIN"/>
    <property type="match status" value="1"/>
</dbReference>
<dbReference type="PANTHER" id="PTHR10772:SF58">
    <property type="entry name" value="CO-CHAPERONIN GROES"/>
    <property type="match status" value="1"/>
</dbReference>
<dbReference type="Pfam" id="PF00166">
    <property type="entry name" value="Cpn10"/>
    <property type="match status" value="1"/>
</dbReference>
<dbReference type="PRINTS" id="PR00297">
    <property type="entry name" value="CHAPERONIN10"/>
</dbReference>
<dbReference type="SMART" id="SM00883">
    <property type="entry name" value="Cpn10"/>
    <property type="match status" value="1"/>
</dbReference>
<dbReference type="SUPFAM" id="SSF50129">
    <property type="entry name" value="GroES-like"/>
    <property type="match status" value="1"/>
</dbReference>
<dbReference type="PROSITE" id="PS00681">
    <property type="entry name" value="CHAPERONINS_CPN10"/>
    <property type="match status" value="1"/>
</dbReference>
<protein>
    <recommendedName>
        <fullName evidence="1">Co-chaperonin GroES</fullName>
    </recommendedName>
    <alternativeName>
        <fullName evidence="1">10 kDa chaperonin</fullName>
    </alternativeName>
    <alternativeName>
        <fullName evidence="1">Chaperonin-10</fullName>
        <shortName evidence="1">Cpn10</shortName>
    </alternativeName>
</protein>
<comment type="function">
    <text evidence="1">Together with the chaperonin GroEL, plays an essential role in assisting protein folding. The GroEL-GroES system forms a nano-cage that allows encapsulation of the non-native substrate proteins and provides a physical environment optimized to promote and accelerate protein folding. GroES binds to the apical surface of the GroEL ring, thereby capping the opening of the GroEL channel.</text>
</comment>
<comment type="subunit">
    <text evidence="1">Heptamer of 7 subunits arranged in a ring. Interacts with the chaperonin GroEL.</text>
</comment>
<comment type="subcellular location">
    <subcellularLocation>
        <location evidence="1">Cytoplasm</location>
    </subcellularLocation>
</comment>
<comment type="similarity">
    <text evidence="1">Belongs to the GroES chaperonin family.</text>
</comment>
<gene>
    <name evidence="1" type="primary">groES</name>
    <name evidence="1" type="synonym">groS</name>
</gene>
<keyword id="KW-0143">Chaperone</keyword>
<keyword id="KW-0963">Cytoplasm</keyword>
<proteinExistence type="inferred from homology"/>
<name>CH10_CLOBO</name>
<organism>
    <name type="scientific">Clostridium botulinum</name>
    <dbReference type="NCBI Taxonomy" id="1491"/>
    <lineage>
        <taxon>Bacteria</taxon>
        <taxon>Bacillati</taxon>
        <taxon>Bacillota</taxon>
        <taxon>Clostridia</taxon>
        <taxon>Eubacteriales</taxon>
        <taxon>Clostridiaceae</taxon>
        <taxon>Clostridium</taxon>
    </lineage>
</organism>
<feature type="chain" id="PRO_0000174735" description="Co-chaperonin GroES">
    <location>
        <begin position="1"/>
        <end position="94"/>
    </location>
</feature>
<evidence type="ECO:0000255" key="1">
    <source>
        <dbReference type="HAMAP-Rule" id="MF_00580"/>
    </source>
</evidence>
<sequence>MRIKPLGDRVVIKRLEAEEKTKSGIVLPGSAKEKPQEAEIVAVGPGGLVDGKEVNMEVKVGDRVLFSQYAGNEVKIDGEEYIILRQNDILAIVE</sequence>